<name>GDU7_ARATH</name>
<comment type="function">
    <text evidence="3 4">Probable subunit of an amino acid transporter involved in the regulation of the amino acid metabolism. Stimulates amino acid export by activating nonselective amino acid facilitators.</text>
</comment>
<comment type="subcellular location">
    <subcellularLocation>
        <location evidence="4">Membrane</location>
        <topology evidence="4">Single-pass membrane protein</topology>
    </subcellularLocation>
</comment>
<comment type="tissue specificity">
    <text evidence="3 4">Expressed in the vascular tissues, even in the minor veins of the leaves.</text>
</comment>
<comment type="domain">
    <text evidence="1">The VIMAG motif is necessary for the function of the protein.</text>
</comment>
<comment type="miscellaneous">
    <text>Overexpression of GLUTAMINE DUMPER 7 leads to free amino acid levels accumulation (PubMed:20018597, Ref.6).</text>
</comment>
<comment type="similarity">
    <text evidence="5">Belongs to the GLUTAMINE DUMPER 1 (TC 9.B.60) family.</text>
</comment>
<comment type="sequence caution" evidence="5">
    <conflict type="erroneous termination">
        <sequence resource="EMBL-CDS" id="ABK28285"/>
    </conflict>
    <text>Extended C-terminus.</text>
</comment>
<proteinExistence type="evidence at transcript level"/>
<sequence>MSLHRDSMVPVNSRLENMDSPILSKICAWGVMLGLFALSLFAMAYACYHKQTSNSCIEEKQGKKQVLKPLDMEPKIVVIMAGNENPTFFAKPTQINA</sequence>
<organism>
    <name type="scientific">Arabidopsis thaliana</name>
    <name type="common">Mouse-ear cress</name>
    <dbReference type="NCBI Taxonomy" id="3702"/>
    <lineage>
        <taxon>Eukaryota</taxon>
        <taxon>Viridiplantae</taxon>
        <taxon>Streptophyta</taxon>
        <taxon>Embryophyta</taxon>
        <taxon>Tracheophyta</taxon>
        <taxon>Spermatophyta</taxon>
        <taxon>Magnoliopsida</taxon>
        <taxon>eudicotyledons</taxon>
        <taxon>Gunneridae</taxon>
        <taxon>Pentapetalae</taxon>
        <taxon>rosids</taxon>
        <taxon>malvids</taxon>
        <taxon>Brassicales</taxon>
        <taxon>Brassicaceae</taxon>
        <taxon>Camelineae</taxon>
        <taxon>Arabidopsis</taxon>
    </lineage>
</organism>
<accession>Q3E8L0</accession>
<accession>A0MFK2</accession>
<protein>
    <recommendedName>
        <fullName>Protein GLUTAMINE DUMPER 7</fullName>
    </recommendedName>
</protein>
<gene>
    <name type="primary">GDU7</name>
    <name type="ordered locus">At5g38770</name>
    <name type="ORF">MKD10.70</name>
</gene>
<reference key="1">
    <citation type="journal article" date="1998" name="DNA Res.">
        <title>Structural analysis of Arabidopsis thaliana chromosome 5. V. Sequence features of the regions of 1,381,565 bp covered by twenty one physically assigned P1 and TAC clones.</title>
        <authorList>
            <person name="Kaneko T."/>
            <person name="Kotani H."/>
            <person name="Nakamura Y."/>
            <person name="Sato S."/>
            <person name="Asamizu E."/>
            <person name="Miyajima N."/>
            <person name="Tabata S."/>
        </authorList>
    </citation>
    <scope>NUCLEOTIDE SEQUENCE [LARGE SCALE GENOMIC DNA]</scope>
    <source>
        <strain>cv. Columbia</strain>
    </source>
</reference>
<reference key="2">
    <citation type="journal article" date="2017" name="Plant J.">
        <title>Araport11: a complete reannotation of the Arabidopsis thaliana reference genome.</title>
        <authorList>
            <person name="Cheng C.Y."/>
            <person name="Krishnakumar V."/>
            <person name="Chan A.P."/>
            <person name="Thibaud-Nissen F."/>
            <person name="Schobel S."/>
            <person name="Town C.D."/>
        </authorList>
    </citation>
    <scope>GENOME REANNOTATION</scope>
    <source>
        <strain>cv. Columbia</strain>
    </source>
</reference>
<reference key="3">
    <citation type="journal article" date="2006" name="Plant Biotechnol. J.">
        <title>Simultaneous high-throughput recombinational cloning of open reading frames in closed and open configurations.</title>
        <authorList>
            <person name="Underwood B.A."/>
            <person name="Vanderhaeghen R."/>
            <person name="Whitford R."/>
            <person name="Town C.D."/>
            <person name="Hilson P."/>
        </authorList>
    </citation>
    <scope>NUCLEOTIDE SEQUENCE [LARGE SCALE GENOMIC DNA]</scope>
    <source>
        <strain>cv. Columbia</strain>
    </source>
</reference>
<reference key="4">
    <citation type="journal article" date="2006" name="FEBS Lett.">
        <title>The plant-specific VIMAG domain of Glutamine Dumper1 is necessary for the function of the protein in Arabidopsis.</title>
        <authorList>
            <person name="Pratelli R."/>
            <person name="Pilot G."/>
        </authorList>
    </citation>
    <scope>GENE FAMILY</scope>
</reference>
<reference key="5">
    <citation type="journal article" date="2007" name="FEBS Lett.">
        <authorList>
            <person name="Pratelli R."/>
            <person name="Pilot G."/>
        </authorList>
    </citation>
    <scope>ERRATUM OF PUBMED:17157837</scope>
</reference>
<reference key="6">
    <citation type="book" date="2008" name="Proceedings of the 19th international conference on Arabidopsis research">
        <title>The over-expression of GDU-like genes leads to modification in amino acid content and transport.</title>
        <authorList>
            <person name="Pratelli R."/>
            <person name="Frommer W.B."/>
            <person name="Pilot G."/>
        </authorList>
    </citation>
    <scope>FUNCTION</scope>
    <scope>TISSUE SPECIFICITY</scope>
    <scope>SUBCELLULAR LOCATION</scope>
</reference>
<reference key="7">
    <citation type="journal article" date="2010" name="Plant Physiol.">
        <title>Stimulation of nonselective amino acid export by glutamine dumper proteins.</title>
        <authorList>
            <person name="Pratelli R."/>
            <person name="Voll L.M."/>
            <person name="Horst R.J."/>
            <person name="Frommer W.B."/>
            <person name="Pilot G."/>
        </authorList>
    </citation>
    <scope>FUNCTION</scope>
    <scope>TISSUE SPECIFICITY</scope>
</reference>
<keyword id="KW-0029">Amino-acid transport</keyword>
<keyword id="KW-0472">Membrane</keyword>
<keyword id="KW-1185">Reference proteome</keyword>
<keyword id="KW-0812">Transmembrane</keyword>
<keyword id="KW-1133">Transmembrane helix</keyword>
<keyword id="KW-0813">Transport</keyword>
<feature type="chain" id="PRO_0000419945" description="Protein GLUTAMINE DUMPER 7">
    <location>
        <begin position="1"/>
        <end position="97"/>
    </location>
</feature>
<feature type="topological domain" description="Extracellular" evidence="2">
    <location>
        <begin position="1"/>
        <end position="25"/>
    </location>
</feature>
<feature type="transmembrane region" description="Helical" evidence="2">
    <location>
        <begin position="26"/>
        <end position="46"/>
    </location>
</feature>
<feature type="topological domain" description="Cytoplasmic" evidence="2">
    <location>
        <begin position="47"/>
        <end position="97"/>
    </location>
</feature>
<feature type="short sequence motif" description="VIMAG">
    <location>
        <begin position="78"/>
        <end position="82"/>
    </location>
</feature>
<evidence type="ECO:0000250" key="1"/>
<evidence type="ECO:0000255" key="2"/>
<evidence type="ECO:0000269" key="3">
    <source>
    </source>
</evidence>
<evidence type="ECO:0000269" key="4">
    <source ref="6"/>
</evidence>
<evidence type="ECO:0000305" key="5"/>
<dbReference type="EMBL" id="AB011478">
    <property type="status" value="NOT_ANNOTATED_CDS"/>
    <property type="molecule type" value="Genomic_DNA"/>
</dbReference>
<dbReference type="EMBL" id="CP002688">
    <property type="protein sequence ID" value="AED94358.1"/>
    <property type="molecule type" value="Genomic_DNA"/>
</dbReference>
<dbReference type="EMBL" id="DQ447014">
    <property type="protein sequence ID" value="ABE65568.1"/>
    <property type="molecule type" value="Genomic_DNA"/>
</dbReference>
<dbReference type="EMBL" id="DQ653328">
    <property type="protein sequence ID" value="ABK28285.1"/>
    <property type="status" value="ALT_SEQ"/>
    <property type="molecule type" value="Genomic_DNA"/>
</dbReference>
<dbReference type="RefSeq" id="NP_198693.1">
    <property type="nucleotide sequence ID" value="NM_123238.2"/>
</dbReference>
<dbReference type="SMR" id="Q3E8L0"/>
<dbReference type="BioGRID" id="19119">
    <property type="interactions" value="2"/>
</dbReference>
<dbReference type="FunCoup" id="Q3E8L0">
    <property type="interactions" value="1"/>
</dbReference>
<dbReference type="IntAct" id="Q3E8L0">
    <property type="interactions" value="3"/>
</dbReference>
<dbReference type="MINT" id="Q3E8L0"/>
<dbReference type="PaxDb" id="3702-AT5G38770.1"/>
<dbReference type="EnsemblPlants" id="AT5G38770.1">
    <property type="protein sequence ID" value="AT5G38770.1"/>
    <property type="gene ID" value="AT5G38770"/>
</dbReference>
<dbReference type="GeneID" id="833868"/>
<dbReference type="Gramene" id="AT5G38770.1">
    <property type="protein sequence ID" value="AT5G38770.1"/>
    <property type="gene ID" value="AT5G38770"/>
</dbReference>
<dbReference type="KEGG" id="ath:AT5G38770"/>
<dbReference type="Araport" id="AT5G38770"/>
<dbReference type="TAIR" id="AT5G38770">
    <property type="gene designation" value="GDU7"/>
</dbReference>
<dbReference type="HOGENOM" id="CLU_112624_3_0_1"/>
<dbReference type="InParanoid" id="Q3E8L0"/>
<dbReference type="OMA" id="AYACYHK"/>
<dbReference type="OrthoDB" id="770444at2759"/>
<dbReference type="PhylomeDB" id="Q3E8L0"/>
<dbReference type="PRO" id="PR:Q3E8L0"/>
<dbReference type="Proteomes" id="UP000006548">
    <property type="component" value="Chromosome 5"/>
</dbReference>
<dbReference type="ExpressionAtlas" id="Q3E8L0">
    <property type="expression patterns" value="baseline and differential"/>
</dbReference>
<dbReference type="GO" id="GO:0016020">
    <property type="term" value="C:membrane"/>
    <property type="evidence" value="ECO:0007669"/>
    <property type="project" value="UniProtKB-SubCell"/>
</dbReference>
<dbReference type="GO" id="GO:0006865">
    <property type="term" value="P:amino acid transport"/>
    <property type="evidence" value="ECO:0007669"/>
    <property type="project" value="UniProtKB-KW"/>
</dbReference>
<dbReference type="GO" id="GO:0080143">
    <property type="term" value="P:regulation of amino acid export"/>
    <property type="evidence" value="ECO:0000315"/>
    <property type="project" value="TAIR"/>
</dbReference>
<dbReference type="InterPro" id="IPR040359">
    <property type="entry name" value="GDU"/>
</dbReference>
<dbReference type="PANTHER" id="PTHR33228">
    <property type="entry name" value="PROTEIN GLUTAMINE DUMPER 4-RELATED"/>
    <property type="match status" value="1"/>
</dbReference>
<dbReference type="PANTHER" id="PTHR33228:SF76">
    <property type="entry name" value="PROTEIN GLUTAMINE DUMPER 7"/>
    <property type="match status" value="1"/>
</dbReference>